<accession>Q01668</accession>
<accession>B0FYA3</accession>
<accession>Q13916</accession>
<accession>Q13931</accession>
<accession>Q71UT1</accession>
<accession>Q9UDC3</accession>
<proteinExistence type="evidence at protein level"/>
<comment type="function">
    <text evidence="10 13 14 15">Voltage-sensitive calcium channels (VSCC) mediate the entry of calcium ions into excitable cells and are also involved in a variety of calcium-dependent processes, including muscle contraction, hormone or neurotransmitter release, gene expression, cell motility, cell division and cell death. The isoform alpha-1D gives rise to L-type calcium currents. Long-lasting (L-type) calcium channels belong to the 'high-voltage activated' (HVA) group. They are blocked by dihydropyridines (DHP), phenylalkylamines, and by benzothiazepines.</text>
</comment>
<comment type="function">
    <molecule>Isoform Neuronal-type</molecule>
    <text evidence="7">Voltage-sensitive calcium channels (VSCC) mediate the entry of calcium ions into excitable cells and are also involved in a variety of calcium-dependent processes, including muscle contraction, hormone or neurotransmitter release, gene expression, cell motility, cell division and cell death. The isoform alpha-1D gives rise to L-type calcium currents.</text>
</comment>
<comment type="function">
    <molecule>Isoform 3</molecule>
    <text evidence="9">Voltage-sensitive calcium channels (VSCC) mediate the entry of calcium ions into excitable cells and are also involved in a variety of calcium-dependent processes, including muscle contraction, hormone or neurotransmitter release, gene expression, cell motility, cell division and cell death. The isoform alpha-1D gives rise to L-type calcium currents.</text>
</comment>
<comment type="function">
    <molecule>Isoform 4</molecule>
    <text evidence="9">Voltage-sensitive calcium channels (VSCC) mediate the entry of calcium ions into excitable cells and are also involved in a variety of calcium-dependent processes, including muscle contraction, hormone or neurotransmitter release, gene expression, cell motility, cell division and cell death. The isoform alpha-1D gives rise to L-type calcium currents.</text>
</comment>
<comment type="catalytic activity">
    <reaction evidence="10 13 14 15">
        <text>Ca(2+)(in) = Ca(2+)(out)</text>
        <dbReference type="Rhea" id="RHEA:29671"/>
        <dbReference type="ChEBI" id="CHEBI:29108"/>
    </reaction>
</comment>
<comment type="catalytic activity">
    <molecule>Isoform Neuronal-type</molecule>
    <reaction evidence="7">
        <text>Ca(2+)(in) = Ca(2+)(out)</text>
        <dbReference type="Rhea" id="RHEA:29671"/>
        <dbReference type="ChEBI" id="CHEBI:29108"/>
    </reaction>
</comment>
<comment type="catalytic activity">
    <molecule>Isoform 3</molecule>
    <reaction evidence="9">
        <text>Ca(2+)(in) = Ca(2+)(out)</text>
        <dbReference type="Rhea" id="RHEA:29671"/>
        <dbReference type="ChEBI" id="CHEBI:29108"/>
    </reaction>
</comment>
<comment type="catalytic activity">
    <molecule>Isoform 4</molecule>
    <reaction evidence="9">
        <text>Ca(2+)(in) = Ca(2+)(out)</text>
        <dbReference type="Rhea" id="RHEA:29671"/>
        <dbReference type="ChEBI" id="CHEBI:29108"/>
    </reaction>
</comment>
<comment type="subunit">
    <text evidence="2 4 9">Voltage-dependent calcium channels are multisubunit complexes, consisting of alpha-1, alpha-2, beta and delta subunits in a 1:1:1:1 ratio. The channel activity is directed by the pore-forming and voltage-sensitive alpha-1 subunit. In many cases, this subunit is sufficient to generate voltage-sensitive calcium channel activity. The auxiliary subunits beta and alpha-2/delta linked by a disulfide bridge regulate the channel activity. Channel activity is further modulated, depending on the presence of specific delta subunit isoforms. Interacts (via IQ domain) with CABP1 and CABP4 in a calcium independent manner (By similarity). Interacts with RIMBP2 (By similarity).</text>
</comment>
<comment type="interaction">
    <interactant intactId="EBI-9207771">
        <id>Q01668</id>
    </interactant>
    <interactant intactId="EBI-20939234">
        <id>Q9BYB0-1</id>
        <label>SHANK3</label>
    </interactant>
    <organismsDiffer>false</organismsDiffer>
    <experiments>2</experiments>
</comment>
<comment type="subcellular location">
    <subcellularLocation>
        <location evidence="9">Membrane</location>
        <topology evidence="5">Multi-pass membrane protein</topology>
    </subcellularLocation>
</comment>
<comment type="alternative products">
    <event type="alternative splicing"/>
    <isoform>
        <id>Q01668-1</id>
        <name>Neuronal-type</name>
        <sequence type="displayed"/>
    </isoform>
    <isoform>
        <id>Q01668-2</id>
        <name>Beta-cell-type</name>
        <sequence type="described" ref="VSP_000913 VSP_000914"/>
    </isoform>
    <isoform>
        <id>Q01668-4</id>
        <name>4</name>
        <name>Ca(V)1.3(42A)</name>
        <sequence type="described" ref="VSP_047921 VSP_047922"/>
    </isoform>
    <isoform>
        <id>Q01668-3</id>
        <name>3</name>
        <sequence type="described" ref="VSP_046743 VSP_046744"/>
    </isoform>
    <text>Additional isoforms seem to exist.</text>
</comment>
<comment type="tissue specificity">
    <text evidence="8">Expressed in pancreatic islets and in brain, where it has been seen in cerebral cortex, hippocampus, basal ganglia, habenula and thalamus. Expressed in the small cell lung carcinoma cell line SCC-9. No expression in skeletal muscle.</text>
</comment>
<comment type="domain">
    <text>Each of the four internal repeats contains five hydrophobic transmembrane segments (S1, S2, S3, S5, S6) and one positively charged transmembrane segment (S4). S4 segments probably represent the voltage-sensor and are characterized by a series of positively charged amino acids at every third position.</text>
</comment>
<comment type="polymorphism">
    <text evidence="16">A change from seven to eight ATG trinucleotide repeats, resulting in an additional N-terminal methionine, has been found in a patient with non-insulin-dependent diabetes mellitus (NIDDM).</text>
</comment>
<comment type="disease" evidence="10">
    <disease id="DI-03562">
        <name>Sinoatrial node dysfunction and deafness</name>
        <acronym>SANDD</acronym>
        <description>A disease characterized by congenital severe to profound deafness without vestibular dysfunction, associated with episodic syncope due to intermittent pronounced bradycardia.</description>
        <dbReference type="MIM" id="614896"/>
    </disease>
    <text>The disease is caused by variants affecting the gene represented in this entry.</text>
</comment>
<comment type="disease" evidence="13">
    <disease id="DI-03908">
        <name>Primary aldosteronism, seizures, and neurologic abnormalities</name>
        <acronym>PASNA</acronym>
        <description>A disorder characterized by hypertension, hypokalemia, and high aldosterone levels with low plasma renin activity and an elevated aldosterone/renin ratio. Other features include generalized seizures, cerebral palsy, spasticity, intellectual disability, and developmental delay.</description>
        <dbReference type="MIM" id="615474"/>
    </disease>
    <text>The disease is caused by variants affecting the gene represented in this entry.</text>
</comment>
<comment type="disease">
    <text evidence="11 12 14 15">Gain of function variations affecting the gene represented in this entry may be associated with susceptibility to autism spetrum disorders.</text>
</comment>
<comment type="miscellaneous">
    <molecule>Isoform 4</molecule>
    <text evidence="19">Expressed at 5% to 15% of isoform Neuronal-type in brain tissues, increased current density.</text>
</comment>
<comment type="similarity">
    <text evidence="19">Belongs to the calcium channel alpha-1 subunit (TC 1.A.1.11) family. CACNA1D subfamily.</text>
</comment>
<name>CAC1D_HUMAN</name>
<reference key="1">
    <citation type="journal article" date="1992" name="Neuron">
        <title>Structure and functional expression of alpha 1, alpha 2, and beta subunits of a novel human neuronal calcium channel subtype.</title>
        <authorList>
            <person name="Williams M.E."/>
            <person name="Feldman D.H."/>
            <person name="McCue A.F."/>
            <person name="Brenner R."/>
            <person name="Velicelebi G."/>
            <person name="Ellis S.B."/>
            <person name="Harpold M.M."/>
        </authorList>
    </citation>
    <scope>NUCLEOTIDE SEQUENCE [MRNA] (ISOFORM NEURONAL-TYPE)</scope>
    <scope>FUNCTION (ISOFORM NEURONAL-TYPE)</scope>
    <scope>TRANSPORTER ACTIVITY (ISOFORM NEURONAL-TYPE)</scope>
    <source>
        <tissue>Neuroblastoma</tissue>
    </source>
</reference>
<reference key="2">
    <citation type="journal article" date="1992" name="Proc. Natl. Acad. Sci. U.S.A.">
        <title>Cloning of the alpha 1 subunit of a voltage-dependent calcium channel expressed in pancreatic beta cells.</title>
        <authorList>
            <person name="Seino S."/>
            <person name="Chen L."/>
            <person name="Seino M."/>
            <person name="Blondel O."/>
            <person name="Takeda J."/>
            <person name="Johnson J.H."/>
            <person name="Bell G.I."/>
        </authorList>
    </citation>
    <scope>NUCLEOTIDE SEQUENCE [MRNA] (ISOFORM BETA-CELL-TYPE)</scope>
    <source>
        <tissue>Pancreatic islet</tissue>
    </source>
</reference>
<reference key="3">
    <citation type="journal article" date="1995" name="Genomics">
        <title>The structures of the human calcium channel alpha 1 subunit (CACNL1A2) and beta subunit (CACNLB3) genes.</title>
        <authorList>
            <person name="Yamada Y."/>
            <person name="Masuda K."/>
            <person name="Li Q."/>
            <person name="Ihara Y."/>
            <person name="Kubota A."/>
            <person name="Miura T."/>
            <person name="Nakamura K."/>
            <person name="Fujii Y."/>
            <person name="Seino S."/>
            <person name="Seino Y."/>
        </authorList>
    </citation>
    <scope>NUCLEOTIDE SEQUENCE [GENOMIC DNA] (ISOFORM BETA-CELL-TYPE)</scope>
    <scope>VARIANT MET-1 INS</scope>
</reference>
<reference key="4">
    <citation type="journal article" date="2008" name="J. Biol. Chem.">
        <title>Modulation of voltage- and Ca2+-dependent gating of CaV1.3 L-type calcium channels by alternative splicing of a C-terminal regulatory domain.</title>
        <authorList>
            <person name="Singh A."/>
            <person name="Gebhart M."/>
            <person name="Fritsch R."/>
            <person name="Sinnegger-Brauns M.J."/>
            <person name="Poggiani C."/>
            <person name="Hoda J.C."/>
            <person name="Engel J."/>
            <person name="Romanin C."/>
            <person name="Striessnig J."/>
            <person name="Koschak A."/>
        </authorList>
    </citation>
    <scope>NUCLEOTIDE SEQUENCE [MRNA] (ISOFORM 3)</scope>
    <scope>FUNCTION (ISOFORMS 3 AND 4)</scope>
    <scope>SUBUNIT</scope>
    <scope>SUBCELLULAR LOCATION</scope>
    <scope>ALTERNATIVE SPLICING (ISOFORM 4)</scope>
    <scope>TRANSPORTER ACTIVITY (ISOFORMS 3 AND 4)</scope>
    <source>
        <tissue>Pancreas</tissue>
    </source>
</reference>
<reference key="5">
    <citation type="journal article" date="2006" name="Nature">
        <title>The DNA sequence, annotation and analysis of human chromosome 3.</title>
        <authorList>
            <person name="Muzny D.M."/>
            <person name="Scherer S.E."/>
            <person name="Kaul R."/>
            <person name="Wang J."/>
            <person name="Yu J."/>
            <person name="Sudbrak R."/>
            <person name="Buhay C.J."/>
            <person name="Chen R."/>
            <person name="Cree A."/>
            <person name="Ding Y."/>
            <person name="Dugan-Rocha S."/>
            <person name="Gill R."/>
            <person name="Gunaratne P."/>
            <person name="Harris R.A."/>
            <person name="Hawes A.C."/>
            <person name="Hernandez J."/>
            <person name="Hodgson A.V."/>
            <person name="Hume J."/>
            <person name="Jackson A."/>
            <person name="Khan Z.M."/>
            <person name="Kovar-Smith C."/>
            <person name="Lewis L.R."/>
            <person name="Lozado R.J."/>
            <person name="Metzker M.L."/>
            <person name="Milosavljevic A."/>
            <person name="Miner G.R."/>
            <person name="Morgan M.B."/>
            <person name="Nazareth L.V."/>
            <person name="Scott G."/>
            <person name="Sodergren E."/>
            <person name="Song X.-Z."/>
            <person name="Steffen D."/>
            <person name="Wei S."/>
            <person name="Wheeler D.A."/>
            <person name="Wright M.W."/>
            <person name="Worley K.C."/>
            <person name="Yuan Y."/>
            <person name="Zhang Z."/>
            <person name="Adams C.Q."/>
            <person name="Ansari-Lari M.A."/>
            <person name="Ayele M."/>
            <person name="Brown M.J."/>
            <person name="Chen G."/>
            <person name="Chen Z."/>
            <person name="Clendenning J."/>
            <person name="Clerc-Blankenburg K.P."/>
            <person name="Chen R."/>
            <person name="Chen Z."/>
            <person name="Davis C."/>
            <person name="Delgado O."/>
            <person name="Dinh H.H."/>
            <person name="Dong W."/>
            <person name="Draper H."/>
            <person name="Ernst S."/>
            <person name="Fu G."/>
            <person name="Gonzalez-Garay M.L."/>
            <person name="Garcia D.K."/>
            <person name="Gillett W."/>
            <person name="Gu J."/>
            <person name="Hao B."/>
            <person name="Haugen E."/>
            <person name="Havlak P."/>
            <person name="He X."/>
            <person name="Hennig S."/>
            <person name="Hu S."/>
            <person name="Huang W."/>
            <person name="Jackson L.R."/>
            <person name="Jacob L.S."/>
            <person name="Kelly S.H."/>
            <person name="Kube M."/>
            <person name="Levy R."/>
            <person name="Li Z."/>
            <person name="Liu B."/>
            <person name="Liu J."/>
            <person name="Liu W."/>
            <person name="Lu J."/>
            <person name="Maheshwari M."/>
            <person name="Nguyen B.-V."/>
            <person name="Okwuonu G.O."/>
            <person name="Palmeiri A."/>
            <person name="Pasternak S."/>
            <person name="Perez L.M."/>
            <person name="Phelps K.A."/>
            <person name="Plopper F.J."/>
            <person name="Qiang B."/>
            <person name="Raymond C."/>
            <person name="Rodriguez R."/>
            <person name="Saenphimmachak C."/>
            <person name="Santibanez J."/>
            <person name="Shen H."/>
            <person name="Shen Y."/>
            <person name="Subramanian S."/>
            <person name="Tabor P.E."/>
            <person name="Verduzco D."/>
            <person name="Waldron L."/>
            <person name="Wang J."/>
            <person name="Wang J."/>
            <person name="Wang Q."/>
            <person name="Williams G.A."/>
            <person name="Wong G.K.-S."/>
            <person name="Yao Z."/>
            <person name="Zhang J."/>
            <person name="Zhang X."/>
            <person name="Zhao G."/>
            <person name="Zhou J."/>
            <person name="Zhou Y."/>
            <person name="Nelson D."/>
            <person name="Lehrach H."/>
            <person name="Reinhardt R."/>
            <person name="Naylor S.L."/>
            <person name="Yang H."/>
            <person name="Olson M."/>
            <person name="Weinstock G."/>
            <person name="Gibbs R.A."/>
        </authorList>
    </citation>
    <scope>NUCLEOTIDE SEQUENCE [LARGE SCALE GENOMIC DNA]</scope>
</reference>
<reference key="6">
    <citation type="journal article" date="1998" name="Exp. Mol. Med.">
        <title>Genomic structure of the regulatory region of the voltage-gated calcium channel alpha 1D.</title>
        <authorList>
            <person name="Kim H.-L."/>
            <person name="Chang Y.J."/>
            <person name="Lee S.M."/>
            <person name="Hong Y.-S."/>
        </authorList>
    </citation>
    <scope>NUCLEOTIDE SEQUENCE [GENOMIC DNA] OF 1-125</scope>
</reference>
<reference key="7">
    <citation type="journal article" date="1992" name="Mayo Clin. Proc.">
        <title>Molecular diversity of neuronal-type calcium channels identified in small cell lung carcinoma.</title>
        <authorList>
            <person name="Oguro-Okano M."/>
            <person name="Griesmann G.E."/>
            <person name="Wieben E.D."/>
            <person name="Slaymaker S.J."/>
            <person name="Snutch T.P."/>
            <person name="Lennon V.A."/>
        </authorList>
    </citation>
    <scope>NUCLEOTIDE SEQUENCE [MRNA] OF 747-1039</scope>
    <scope>TISSUE SPECIFICITY</scope>
    <source>
        <tissue>Lung carcinoma</tissue>
    </source>
</reference>
<reference key="8">
    <citation type="journal article" date="2011" name="Protein Sci.">
        <title>Loss of recognition by cross-reactive T cells and its relation to a C-terminus-induced conformational reorientation of an HLA-B*2705-bound peptide.</title>
        <authorList>
            <person name="Loll B."/>
            <person name="Ruckert C."/>
            <person name="Hee C.S."/>
            <person name="Saenger W."/>
            <person name="Uchanska-Ziegler B."/>
            <person name="Ziegler A."/>
        </authorList>
    </citation>
    <scope>X-RAY CRYSTALLOGRAPHY (1.94 ANGSTROMS) OF 502-510 IN COMPLEX WITH HLA</scope>
</reference>
<reference key="9">
    <citation type="journal article" date="2011" name="Nat. Neurosci.">
        <title>Loss of Ca(v)1.3 (CACNA1D) function in a human channelopathy with bradycardia and congenital deafness.</title>
        <authorList>
            <person name="Baig S.M."/>
            <person name="Koschak A."/>
            <person name="Lieb A."/>
            <person name="Gebhart M."/>
            <person name="Dafinger C."/>
            <person name="Nurnberg G."/>
            <person name="Ali A."/>
            <person name="Ahmad I."/>
            <person name="Sinnegger-Brauns M.J."/>
            <person name="Brandt N."/>
            <person name="Engel J."/>
            <person name="Mangoni M.E."/>
            <person name="Farooq M."/>
            <person name="Khan H.U."/>
            <person name="Nurnberg P."/>
            <person name="Striessnig J."/>
            <person name="Bolz H.J."/>
        </authorList>
    </citation>
    <scope>VARIANT SANDD GLY-403 INS</scope>
    <scope>CHARACTERIZATION OF VARIANT SANDD GLY-403 INS</scope>
    <scope>FUNCTION</scope>
    <scope>TRANSPORTER ACTIVITY</scope>
</reference>
<reference key="10">
    <citation type="journal article" date="2012" name="Nature">
        <title>Sporadic autism exomes reveal a highly interconnected protein network of de novo mutations.</title>
        <authorList>
            <person name="O'Roak B.J."/>
            <person name="Vives L."/>
            <person name="Girirajan S."/>
            <person name="Karakoc E."/>
            <person name="Krumm N."/>
            <person name="Coe B.P."/>
            <person name="Levy R."/>
            <person name="Ko A."/>
            <person name="Lee C."/>
            <person name="Smith J.D."/>
            <person name="Turner E.H."/>
            <person name="Stanaway I.B."/>
            <person name="Vernot B."/>
            <person name="Malig M."/>
            <person name="Baker C."/>
            <person name="Reilly B."/>
            <person name="Akey J.M."/>
            <person name="Borenstein E."/>
            <person name="Rieder M.J."/>
            <person name="Nickerson D.A."/>
            <person name="Bernier R."/>
            <person name="Shendure J."/>
            <person name="Eichler E.E."/>
        </authorList>
    </citation>
    <scope>VARIANT GLY-749</scope>
</reference>
<reference key="11">
    <citation type="journal article" date="2012" name="Neuron">
        <title>De novo gene disruptions in children on the autistic spectrum.</title>
        <authorList>
            <person name="Iossifov I."/>
            <person name="Ronemus M."/>
            <person name="Levy D."/>
            <person name="Wang Z."/>
            <person name="Hakker I."/>
            <person name="Rosenbaum J."/>
            <person name="Yamrom B."/>
            <person name="Lee Y.H."/>
            <person name="Narzisi G."/>
            <person name="Leotta A."/>
            <person name="Kendall J."/>
            <person name="Grabowska E."/>
            <person name="Ma B."/>
            <person name="Marks S."/>
            <person name="Rodgers L."/>
            <person name="Stepansky A."/>
            <person name="Troge J."/>
            <person name="Andrews P."/>
            <person name="Bekritsky M."/>
            <person name="Pradhan K."/>
            <person name="Ghiban E."/>
            <person name="Kramer M."/>
            <person name="Parla J."/>
            <person name="Demeter R."/>
            <person name="Fulton L.L."/>
            <person name="Fulton R.S."/>
            <person name="Magrini V.J."/>
            <person name="Ye K."/>
            <person name="Darnell J.C."/>
            <person name="Darnell R.B."/>
            <person name="Mardis E.R."/>
            <person name="Wilson R.K."/>
            <person name="Schatz M.C."/>
            <person name="McCombie W.R."/>
            <person name="Wigler M."/>
        </authorList>
    </citation>
    <scope>VARIANT ARG-407</scope>
</reference>
<reference key="12">
    <citation type="journal article" date="2013" name="Nat. Genet.">
        <title>Somatic and germline CACNA1D calcium channel mutations in aldosterone-producing adenomas and primary aldosteronism.</title>
        <authorList>
            <person name="Scholl U.I."/>
            <person name="Goh G."/>
            <person name="Stoelting G."/>
            <person name="de Oliveira R.C."/>
            <person name="Choi M."/>
            <person name="Overton J.D."/>
            <person name="Fonseca A.L."/>
            <person name="Korah R."/>
            <person name="Starker L.F."/>
            <person name="Kunstman J.W."/>
            <person name="Prasad M.L."/>
            <person name="Hartung E.A."/>
            <person name="Mauras N."/>
            <person name="Benson M.R."/>
            <person name="Brady T."/>
            <person name="Shapiro J.R."/>
            <person name="Loring E."/>
            <person name="Nelson-Williams C."/>
            <person name="Libutti S.K."/>
            <person name="Mane S."/>
            <person name="Hellman P."/>
            <person name="Westin G."/>
            <person name="Aakerstroem G."/>
            <person name="Bjoerklund P."/>
            <person name="Carling T."/>
            <person name="Fahlke C."/>
            <person name="Hidalgo P."/>
            <person name="Lifton R.P."/>
        </authorList>
    </citation>
    <scope>VARIANTS PASNA ASP-403 AND MET-750</scope>
    <scope>CHARACTERIZATION OF VARIANTS PASNA ASP-403 AND MET-750</scope>
    <scope>FUNCTION</scope>
    <scope>TRANSPORTER ACTIVITY</scope>
</reference>
<reference key="13">
    <citation type="journal article" date="2015" name="Biol. Psychiatry">
        <title>CACNA1D de novo mutations in autism spectrum disorders activate Cav1.3 L-type calcium channels.</title>
        <authorList>
            <person name="Pinggera A."/>
            <person name="Lieb A."/>
            <person name="Benedetti B."/>
            <person name="Lampert M."/>
            <person name="Monteleone S."/>
            <person name="Liedl K.R."/>
            <person name="Tuluc P."/>
            <person name="Striessnig J."/>
        </authorList>
    </citation>
    <scope>INVOLVEMENT IN AUTISM SPECTRUM DISORSERS</scope>
    <scope>FUNCTION</scope>
    <scope>CHARACTERIZATION OF VARIANTS ARG-407 AND GLY-749</scope>
    <scope>TRANSPORTER ACTIVITY</scope>
</reference>
<reference key="14">
    <citation type="journal article" date="2017" name="Hum. Mol. Genet.">
        <title>New gain-of-function mutation shows CACNA1D as recurrently mutated gene in autism spectrum disorders and epilepsy.</title>
        <authorList>
            <person name="Pinggera A."/>
            <person name="Mackenroth L."/>
            <person name="Rump A."/>
            <person name="Schallner J."/>
            <person name="Beleggia F."/>
            <person name="Wollnik B."/>
            <person name="Striessnig J."/>
        </authorList>
    </citation>
    <scope>INVOLVEMENT IN AUTISM SPECTRUM DISORSERS</scope>
    <scope>FUNCTION</scope>
    <scope>VARIANT LEU-401</scope>
    <scope>CHARACTERIZATION OF VARIANT LEU-401</scope>
    <scope>TRANSPORTER ACTIVITY</scope>
</reference>
<evidence type="ECO:0000250" key="1"/>
<evidence type="ECO:0000250" key="2">
    <source>
        <dbReference type="UniProtKB" id="O73700"/>
    </source>
</evidence>
<evidence type="ECO:0000250" key="3">
    <source>
        <dbReference type="UniProtKB" id="P07293"/>
    </source>
</evidence>
<evidence type="ECO:0000250" key="4">
    <source>
        <dbReference type="UniProtKB" id="Q99246"/>
    </source>
</evidence>
<evidence type="ECO:0000255" key="5"/>
<evidence type="ECO:0000256" key="6">
    <source>
        <dbReference type="SAM" id="MobiDB-lite"/>
    </source>
</evidence>
<evidence type="ECO:0000269" key="7">
    <source>
    </source>
</evidence>
<evidence type="ECO:0000269" key="8">
    <source>
    </source>
</evidence>
<evidence type="ECO:0000269" key="9">
    <source>
    </source>
</evidence>
<evidence type="ECO:0000269" key="10">
    <source>
    </source>
</evidence>
<evidence type="ECO:0000269" key="11">
    <source>
    </source>
</evidence>
<evidence type="ECO:0000269" key="12">
    <source>
    </source>
</evidence>
<evidence type="ECO:0000269" key="13">
    <source>
    </source>
</evidence>
<evidence type="ECO:0000269" key="14">
    <source>
    </source>
</evidence>
<evidence type="ECO:0000269" key="15">
    <source>
    </source>
</evidence>
<evidence type="ECO:0000269" key="16">
    <source>
    </source>
</evidence>
<evidence type="ECO:0000303" key="17">
    <source>
    </source>
</evidence>
<evidence type="ECO:0000303" key="18">
    <source>
    </source>
</evidence>
<evidence type="ECO:0000305" key="19"/>
<evidence type="ECO:0007829" key="20">
    <source>
        <dbReference type="PDB" id="7UHF"/>
    </source>
</evidence>
<evidence type="ECO:0007829" key="21">
    <source>
        <dbReference type="PDB" id="7UHG"/>
    </source>
</evidence>
<evidence type="ECO:0007829" key="22">
    <source>
        <dbReference type="PDB" id="8E59"/>
    </source>
</evidence>
<evidence type="ECO:0007829" key="23">
    <source>
        <dbReference type="PDB" id="8E5A"/>
    </source>
</evidence>
<evidence type="ECO:0007829" key="24">
    <source>
        <dbReference type="PDB" id="8E5B"/>
    </source>
</evidence>
<gene>
    <name type="primary">CACNA1D</name>
    <name type="synonym">CACH3</name>
    <name type="synonym">CACN4</name>
    <name type="synonym">CACNL1A2</name>
    <name type="synonym">CCHL1A2</name>
</gene>
<protein>
    <recommendedName>
        <fullName>Voltage-dependent L-type calcium channel subunit alpha-1D</fullName>
    </recommendedName>
    <alternativeName>
        <fullName>Calcium channel, L type, alpha-1 polypeptide, isoform 2</fullName>
    </alternativeName>
    <alternativeName>
        <fullName>Voltage-gated calcium channel subunit alpha Cav1.3</fullName>
    </alternativeName>
</protein>
<sequence>MMMMMMMKKMQHQRQQQADHANEANYARGTRLPLSGEGPTSQPNSSKQTVLSWQAAIDAARQAKAAQTMSTSAPPPVGSLSQRKRQQYAKSKKQGNSSNSRPARALFCLSLNNPIRRACISIVEWKPFDIFILLAIFANCVALAIYIPFPEDDSNSTNHNLEKVEYAFLIIFTVETFLKIIAYGLLLHPNAYVRNGWNLLDFVIVIVGLFSVILEQLTKETEGGNHSSGKSGGFDVKALRAFRVLRPLRLVSGVPSLQVVLNSIIKAMVPLLHIALLVLFVIIIYAIIGLELFIGKMHKTCFFADSDIVAEEDPAPCAFSGNGRQCTANGTECRSGWVGPNGGITNFDNFAFAMLTVFQCITMEGWTDVLYWMNDAMGFELPWVYFVSLVIFGSFFVLNLVLGVLSGEFSKEREKAKARGDFQKLREKQQLEEDLKGYLDWITQAEDIDPENEEEGGEEGKRNTSMPTSETESVNTENVSGEGENRGCCGSLCQAISKSKLSRRWRRWNRFNRRRCRAAVKSVTFYWLVIVLVFLNTLTISSEHYNQPDWLTQIQDIANKVLLALFTCEMLVKMYSLGLQAYFVSLFNRFDCFVVCGGITETILVELEIMSPLGISVFRCVRLLRIFKVTRHWTSLSNLVASLLNSMKSIASLLLLLFLFIIIFSLLGMQLFGGKFNFDETQTKRSTFDNFPQALLTVFQILTGEDWNAVMYDGIMAYGGPSSSGMIVCIYFIILFICGNYILLNVFLAIAVDNLADAESLNTAQKEEAEEKERKKIARKESLENKKNNKPEVNQIANSDNKVTIDDYREEDEDKDPYPPCDVPVGEEEEEEEEDEPEVPAGPRPRRISELNMKEKIAPIPEGSAFFILSKTNPIRVGCHKLINHHIFTNLILVFIMLSSAALAAEDPIRSHSFRNTILGYFDYAFTAIFTVEILLKMTTFGAFLHKGAFCRNYFNLLDMLVVGVSLVSFGIQSSAISVVKILRVLRVLRPLRAINRAKGLKHVVQCVFVAIRTIGNIMIVTTLLQFMFACIGVQLFKGKFYRCTDEAKSNPEECRGLFILYKDGDVDSPVVRERIWQNSDFNFDNVLSAMMALFTVSTFEGWPALLYKAIDSNGENIGPIYNHRVEISIFFIIYIIIVAFFMMNIFVGFVIVTFQEQGEKEYKNCELDKNQRQCVEYALKARPLRRYIPKNPYQYKFWYVVNSSPFEYMMFVLIMLNTLCLAMQHYEQSKMFNDAMDILNMVFTGVFTVEMVLKVIAFKPKGYFSDAWNTFDSLIVIGSIIDVALSEADPTESENVPVPTATPGNSEESNRISITFFRLFRVMRLVKLLSRGEGIRTLLWTFIKSFQALPYVALLIAMLFFIYAVIGMQMFGKVAMRDNNQINRNNNFQTFPQAVLLLFRCATGEAWQEIMLACLPGKLCDPESDYNPGEEYTCGSNFAIVYFISFYMLCAFLIINLFVAVIMDNFDYLTRDWSILGPHHLDEFKRIWSEYDPEAKGRIKHLDVVTLLRRIQPPLGFGKLCPHRVACKRLVAMNMPLNSDGTVMFNATLFALVRTALKIKTEGNLEQANEELRAVIKKIWKKTSMKLLDQVVPPAGDDEVTVGKFYATFLIQDYFRKFKKRKEQGLVGKYPAKNTTIALQAGLRTLHDIGPEIRRAISCDLQDDEPEETKREEEDDVFKRNGALLGNHVNHVNSDRRDSLQQTNTTHRPLHVQRPSIPPASDTEKPLFPPAGNSVCHNHHNHNSIGKQVPTSTNANLNNANMSKAAHGKRPSIGNLEHVSENGHHSSHKHDREPQRRSSVKRTRYYETYIRSDSGDEQLPTICREDPEIHGYFRDPHCLGEQEYFSSEECYEDDSSPTWSRQNYGYYSRYPGRNIDSERPRGYHHPQGFLEDDDSPVCYDSRRSPRRRLLPPTPASHRRSSFNFECLRRQSSQEEVPSSPIFPHRTALPLHLMQQQIMAVAGLDSSKAQKYSPSHSTRSWATPPATPPYRDWTPCYTPLIQVEQSEALDQVNGSLPSLHRSSWYTDEPDISYRTFTPASLTVPSSFRNKNSDKQRSADSLVEAVLISEGLGRYARDPKFVSATKHEIADACDLTIDEMESAASTLLNGNVRPRANGDVGPLSHRQDYELQDFGPGYSDEEPDPGRDEEDLADEMICITTL</sequence>
<keyword id="KW-0002">3D-structure</keyword>
<keyword id="KW-0025">Alternative splicing</keyword>
<keyword id="KW-0106">Calcium</keyword>
<keyword id="KW-0107">Calcium channel</keyword>
<keyword id="KW-0109">Calcium transport</keyword>
<keyword id="KW-0209">Deafness</keyword>
<keyword id="KW-0225">Disease variant</keyword>
<keyword id="KW-1015">Disulfide bond</keyword>
<keyword id="KW-0887">Epilepsy</keyword>
<keyword id="KW-0325">Glycoprotein</keyword>
<keyword id="KW-0407">Ion channel</keyword>
<keyword id="KW-0406">Ion transport</keyword>
<keyword id="KW-0472">Membrane</keyword>
<keyword id="KW-0479">Metal-binding</keyword>
<keyword id="KW-0597">Phosphoprotein</keyword>
<keyword id="KW-1267">Proteomics identification</keyword>
<keyword id="KW-1185">Reference proteome</keyword>
<keyword id="KW-0677">Repeat</keyword>
<keyword id="KW-0812">Transmembrane</keyword>
<keyword id="KW-1133">Transmembrane helix</keyword>
<keyword id="KW-0813">Transport</keyword>
<keyword id="KW-0818">Triplet repeat expansion</keyword>
<keyword id="KW-0851">Voltage-gated channel</keyword>
<feature type="chain" id="PRO_0000053933" description="Voltage-dependent L-type calcium channel subunit alpha-1D">
    <location>
        <begin position="1"/>
        <end position="2161"/>
    </location>
</feature>
<feature type="topological domain" description="Cytoplasmic" evidence="5">
    <location>
        <begin position="1"/>
        <end position="126"/>
    </location>
</feature>
<feature type="transmembrane region" description="Helical; Name=S1 of repeat I" evidence="5">
    <location>
        <begin position="127"/>
        <end position="145"/>
    </location>
</feature>
<feature type="topological domain" description="Extracellular" evidence="5">
    <location>
        <begin position="146"/>
        <end position="163"/>
    </location>
</feature>
<feature type="transmembrane region" description="Helical; Name=S2 of repeat I" evidence="5">
    <location>
        <begin position="164"/>
        <end position="183"/>
    </location>
</feature>
<feature type="topological domain" description="Cytoplasmic" evidence="5">
    <location>
        <begin position="184"/>
        <end position="195"/>
    </location>
</feature>
<feature type="transmembrane region" description="Helical; Name=S3 of repeat I" evidence="5">
    <location>
        <begin position="196"/>
        <end position="214"/>
    </location>
</feature>
<feature type="topological domain" description="Extracellular" evidence="5">
    <location>
        <begin position="215"/>
        <end position="235"/>
    </location>
</feature>
<feature type="transmembrane region" description="Helical; Name=S4 of repeat I" evidence="5">
    <location>
        <begin position="236"/>
        <end position="254"/>
    </location>
</feature>
<feature type="topological domain" description="Cytoplasmic" evidence="5">
    <location>
        <begin position="255"/>
        <end position="273"/>
    </location>
</feature>
<feature type="transmembrane region" description="Helical; Name=S5 of repeat I" evidence="5">
    <location>
        <begin position="274"/>
        <end position="293"/>
    </location>
</feature>
<feature type="topological domain" description="Extracellular" evidence="5">
    <location>
        <begin position="294"/>
        <end position="381"/>
    </location>
</feature>
<feature type="transmembrane region" description="Helical; Name=S6 of repeat I" evidence="5">
    <location>
        <begin position="382"/>
        <end position="406"/>
    </location>
</feature>
<feature type="topological domain" description="Cytoplasmic" evidence="5">
    <location>
        <begin position="407"/>
        <end position="523"/>
    </location>
</feature>
<feature type="transmembrane region" description="Helical; Name=S1 of repeat II" evidence="5">
    <location>
        <begin position="524"/>
        <end position="543"/>
    </location>
</feature>
<feature type="topological domain" description="Extracellular" evidence="5">
    <location>
        <begin position="544"/>
        <end position="558"/>
    </location>
</feature>
<feature type="transmembrane region" description="Helical; Name=S2 of repeat II" evidence="5">
    <location>
        <begin position="559"/>
        <end position="577"/>
    </location>
</feature>
<feature type="topological domain" description="Cytoplasmic" evidence="5">
    <location>
        <begin position="578"/>
        <end position="585"/>
    </location>
</feature>
<feature type="transmembrane region" description="Helical; Name=S3 of repeat II" evidence="5">
    <location>
        <begin position="586"/>
        <end position="604"/>
    </location>
</feature>
<feature type="topological domain" description="Extracellular" evidence="5">
    <location>
        <begin position="605"/>
        <end position="614"/>
    </location>
</feature>
<feature type="transmembrane region" description="Helical; Name=S4 of repeat II" evidence="5">
    <location>
        <begin position="615"/>
        <end position="633"/>
    </location>
</feature>
<feature type="topological domain" description="Cytoplasmic" evidence="5">
    <location>
        <begin position="634"/>
        <end position="652"/>
    </location>
</feature>
<feature type="transmembrane region" description="Helical; Name=S5 of repeat II" evidence="5">
    <location>
        <begin position="653"/>
        <end position="673"/>
    </location>
</feature>
<feature type="topological domain" description="Extracellular" evidence="5">
    <location>
        <begin position="674"/>
        <end position="727"/>
    </location>
</feature>
<feature type="transmembrane region" description="Helical; Name=S6 of repeat II" evidence="5">
    <location>
        <begin position="728"/>
        <end position="752"/>
    </location>
</feature>
<feature type="topological domain" description="Cytoplasmic" evidence="5">
    <location>
        <begin position="753"/>
        <end position="886"/>
    </location>
</feature>
<feature type="transmembrane region" description="Helical; Name=S1 of repeat III" evidence="5">
    <location>
        <begin position="887"/>
        <end position="905"/>
    </location>
</feature>
<feature type="topological domain" description="Extracellular" evidence="5">
    <location>
        <begin position="906"/>
        <end position="921"/>
    </location>
</feature>
<feature type="transmembrane region" description="Helical; Name=S2 of repeat III" evidence="5">
    <location>
        <begin position="922"/>
        <end position="941"/>
    </location>
</feature>
<feature type="topological domain" description="Cytoplasmic" evidence="5">
    <location>
        <begin position="942"/>
        <end position="953"/>
    </location>
</feature>
<feature type="transmembrane region" description="Helical; Name=S3 of repeat III" evidence="5">
    <location>
        <begin position="954"/>
        <end position="972"/>
    </location>
</feature>
<feature type="topological domain" description="Extracellular" evidence="5">
    <location>
        <begin position="973"/>
        <end position="978"/>
    </location>
</feature>
<feature type="transmembrane region" description="Helical; Name=S4 of repeat III" evidence="5">
    <location>
        <begin position="979"/>
        <end position="998"/>
    </location>
</feature>
<feature type="topological domain" description="Cytoplasmic" evidence="5">
    <location>
        <begin position="999"/>
        <end position="1017"/>
    </location>
</feature>
<feature type="transmembrane region" description="Helical; Name=S5 of repeat III" evidence="5">
    <location>
        <begin position="1018"/>
        <end position="1037"/>
    </location>
</feature>
<feature type="topological domain" description="Extracellular" evidence="5">
    <location>
        <begin position="1038"/>
        <end position="1127"/>
    </location>
</feature>
<feature type="transmembrane region" description="Helical; Name=S6 of repeat III" evidence="5">
    <location>
        <begin position="1128"/>
        <end position="1148"/>
    </location>
</feature>
<feature type="topological domain" description="Cytoplasmic" evidence="5">
    <location>
        <begin position="1149"/>
        <end position="1205"/>
    </location>
</feature>
<feature type="transmembrane region" description="Helical; Name=S1 of repeat IV" evidence="5">
    <location>
        <begin position="1206"/>
        <end position="1224"/>
    </location>
</feature>
<feature type="topological domain" description="Extracellular" evidence="5">
    <location>
        <begin position="1225"/>
        <end position="1239"/>
    </location>
</feature>
<feature type="transmembrane region" description="Helical; Name=S2 of repeat IV" evidence="5">
    <location>
        <begin position="1240"/>
        <end position="1259"/>
    </location>
</feature>
<feature type="topological domain" description="Cytoplasmic" evidence="5">
    <location>
        <begin position="1260"/>
        <end position="1266"/>
    </location>
</feature>
<feature type="transmembrane region" description="Helical; Name=S3 of repeat IV" evidence="5">
    <location>
        <begin position="1267"/>
        <end position="1288"/>
    </location>
</feature>
<feature type="topological domain" description="Extracellular" evidence="5">
    <location>
        <begin position="1289"/>
        <end position="1313"/>
    </location>
</feature>
<feature type="transmembrane region" description="Helical; Name=S4 of repeat IV" evidence="5">
    <location>
        <begin position="1314"/>
        <end position="1333"/>
    </location>
</feature>
<feature type="topological domain" description="Cytoplasmic" evidence="5">
    <location>
        <begin position="1334"/>
        <end position="1352"/>
    </location>
</feature>
<feature type="transmembrane region" description="Helical; Name=S5 of repeat IV" evidence="5">
    <location>
        <begin position="1353"/>
        <end position="1372"/>
    </location>
</feature>
<feature type="topological domain" description="Extracellular" evidence="5">
    <location>
        <begin position="1373"/>
        <end position="1439"/>
    </location>
</feature>
<feature type="transmembrane region" description="Helical; Name=S6 of repeat IV" evidence="5">
    <location>
        <begin position="1440"/>
        <end position="1464"/>
    </location>
</feature>
<feature type="topological domain" description="Cytoplasmic" evidence="5">
    <location>
        <begin position="1465"/>
        <end position="2161"/>
    </location>
</feature>
<feature type="repeat" description="I">
    <location>
        <begin position="113"/>
        <end position="409"/>
    </location>
</feature>
<feature type="repeat" description="II">
    <location>
        <begin position="509"/>
        <end position="755"/>
    </location>
</feature>
<feature type="repeat" description="III">
    <location>
        <begin position="873"/>
        <end position="1155"/>
    </location>
</feature>
<feature type="repeat" description="IV">
    <location>
        <begin position="1192"/>
        <end position="1467"/>
    </location>
</feature>
<feature type="region of interest" description="Disordered" evidence="6">
    <location>
        <begin position="1"/>
        <end position="21"/>
    </location>
</feature>
<feature type="region of interest" description="Disordered" evidence="6">
    <location>
        <begin position="30"/>
        <end position="49"/>
    </location>
</feature>
<feature type="region of interest" description="Disordered" evidence="6">
    <location>
        <begin position="64"/>
        <end position="100"/>
    </location>
</feature>
<feature type="region of interest" description="Binding to the beta subunit" evidence="1">
    <location>
        <begin position="429"/>
        <end position="446"/>
    </location>
</feature>
<feature type="region of interest" description="Disordered" evidence="6">
    <location>
        <begin position="449"/>
        <end position="482"/>
    </location>
</feature>
<feature type="region of interest" description="Disordered" evidence="6">
    <location>
        <begin position="766"/>
        <end position="850"/>
    </location>
</feature>
<feature type="region of interest" description="Dihydropyridine binding" evidence="1">
    <location>
        <begin position="1075"/>
        <end position="1165"/>
    </location>
</feature>
<feature type="region of interest" description="Dihydropyridine binding" evidence="1">
    <location>
        <begin position="1420"/>
        <end position="1486"/>
    </location>
</feature>
<feature type="region of interest" description="Phenylalkylamine binding" evidence="1">
    <location>
        <begin position="1432"/>
        <end position="1475"/>
    </location>
</feature>
<feature type="region of interest" description="Disordered" evidence="6">
    <location>
        <begin position="1659"/>
        <end position="1678"/>
    </location>
</feature>
<feature type="region of interest" description="Disordered" evidence="6">
    <location>
        <begin position="1684"/>
        <end position="1804"/>
    </location>
</feature>
<feature type="region of interest" description="Disordered" evidence="6">
    <location>
        <begin position="1872"/>
        <end position="1919"/>
    </location>
</feature>
<feature type="region of interest" description="Disordered" evidence="6">
    <location>
        <begin position="2108"/>
        <end position="2152"/>
    </location>
</feature>
<feature type="compositionally biased region" description="Polar residues" evidence="6">
    <location>
        <begin position="38"/>
        <end position="49"/>
    </location>
</feature>
<feature type="compositionally biased region" description="Basic residues" evidence="6">
    <location>
        <begin position="82"/>
        <end position="93"/>
    </location>
</feature>
<feature type="compositionally biased region" description="Polar residues" evidence="6">
    <location>
        <begin position="463"/>
        <end position="479"/>
    </location>
</feature>
<feature type="compositionally biased region" description="Basic and acidic residues" evidence="6">
    <location>
        <begin position="766"/>
        <end position="790"/>
    </location>
</feature>
<feature type="compositionally biased region" description="Polar residues" evidence="6">
    <location>
        <begin position="791"/>
        <end position="802"/>
    </location>
</feature>
<feature type="compositionally biased region" description="Acidic residues" evidence="6">
    <location>
        <begin position="825"/>
        <end position="838"/>
    </location>
</feature>
<feature type="compositionally biased region" description="Polar residues" evidence="6">
    <location>
        <begin position="1745"/>
        <end position="1763"/>
    </location>
</feature>
<feature type="compositionally biased region" description="Basic and acidic residues" evidence="6">
    <location>
        <begin position="1779"/>
        <end position="1797"/>
    </location>
</feature>
<feature type="compositionally biased region" description="Acidic residues" evidence="6">
    <location>
        <begin position="2138"/>
        <end position="2152"/>
    </location>
</feature>
<feature type="binding site" evidence="3">
    <location>
        <position position="364"/>
    </location>
    <ligand>
        <name>Ca(2+)</name>
        <dbReference type="ChEBI" id="CHEBI:29108"/>
    </ligand>
</feature>
<feature type="binding site" evidence="3">
    <location>
        <position position="705"/>
    </location>
    <ligand>
        <name>Ca(2+)</name>
        <dbReference type="ChEBI" id="CHEBI:29108"/>
    </ligand>
</feature>
<feature type="binding site" evidence="3">
    <location>
        <position position="1101"/>
    </location>
    <ligand>
        <name>Ca(2+)</name>
        <dbReference type="ChEBI" id="CHEBI:29108"/>
    </ligand>
</feature>
<feature type="glycosylation site" description="N-linked (GlcNAc...) asparagine" evidence="5">
    <location>
        <position position="155"/>
    </location>
</feature>
<feature type="glycosylation site" description="N-linked (GlcNAc...) asparagine" evidence="5">
    <location>
        <position position="225"/>
    </location>
</feature>
<feature type="glycosylation site" description="N-linked (GlcNAc...) asparagine" evidence="5">
    <location>
        <position position="329"/>
    </location>
</feature>
<feature type="splice variant" id="VSP_000913" description="In isoform Beta-cell-type." evidence="17">
    <original>MNDAMGFELPWVYFVSLVIF</original>
    <variation>VNDAIGWEWPWVYFVSLIIL</variation>
    <location>
        <begin position="373"/>
        <end position="392"/>
    </location>
</feature>
<feature type="splice variant" id="VSP_000914" description="In isoform Beta-cell-type." evidence="17">
    <original>C</original>
    <variation>WCWWRRRGAAKAGPSGCRRWG</variation>
    <location>
        <position position="493"/>
    </location>
</feature>
<feature type="splice variant" id="VSP_046743" description="In isoform 3." evidence="18">
    <location>
        <begin position="1291"/>
        <end position="1305"/>
    </location>
</feature>
<feature type="splice variant" id="VSP_047921" description="In isoform 4." evidence="19">
    <original>AGLRTL</original>
    <variation>MLERML</variation>
    <location>
        <begin position="1642"/>
        <end position="1647"/>
    </location>
</feature>
<feature type="splice variant" id="VSP_047922" description="In isoform 4." evidence="19">
    <location>
        <begin position="1648"/>
        <end position="2161"/>
    </location>
</feature>
<feature type="splice variant" id="VSP_046744" description="In isoform 3." evidence="18">
    <location>
        <begin position="1803"/>
        <end position="1811"/>
    </location>
</feature>
<feature type="sequence variant" id="VAR_001497" description="In a NIDDM patient." evidence="16">
    <original>M</original>
    <variation>MM</variation>
    <location>
        <position position="1"/>
    </location>
</feature>
<feature type="sequence variant" id="VAR_079531" description="Found in a patient with autism spectrum disorder; likely pathogenic; gain of function; increases channel activity; the mutant channel is activated at less depolarized potentials with an increased current density and impaired channel inactivation." evidence="15">
    <original>V</original>
    <variation>L</variation>
    <location>
        <position position="401"/>
    </location>
</feature>
<feature type="sequence variant" id="VAR_070868" description="In PASNA; the mutant channel is activated at less depolarized potentials; results in increased current density and impaired channel inactivation." evidence="13">
    <original>G</original>
    <variation>D</variation>
    <location>
        <position position="403"/>
    </location>
</feature>
<feature type="sequence variant" id="VAR_069170" description="In SANDD; the mutant channels are unable to conduct calcium ions currents and have abnormal voltage-dependent gating." evidence="10">
    <original>G</original>
    <variation>GG</variation>
    <location>
        <position position="403"/>
    </location>
</feature>
<feature type="sequence variant" id="VAR_079532" description="Found in a patient with autism spectrum disorder; likely pathogenic; gain of function; increases channel activity; the mutant channel is activated at less depolarized potentials with an increased current density and impaired channel inactivation; dbSNP:rs1163276899." evidence="12 14">
    <original>G</original>
    <variation>R</variation>
    <location>
        <position position="407"/>
    </location>
</feature>
<feature type="sequence variant" id="VAR_079533" description="Found in a patient with autism spectrum disorder; likely pathogenic; gain of function; increases channel activity; the mutant channel is activated at less depolarized potentials with an increased current density and impaired channel inactivation; dbSNP:rs2094979008." evidence="11 14">
    <original>A</original>
    <variation>G</variation>
    <location>
        <position position="749"/>
    </location>
</feature>
<feature type="sequence variant" id="VAR_070869" description="In PASNA; the mutant channel is activated at less depolarized potentials; results in increased current density; dbSNP:rs41276445." evidence="13">
    <original>I</original>
    <variation>M</variation>
    <location>
        <position position="750"/>
    </location>
</feature>
<feature type="sequence variant" id="VAR_061103" description="In dbSNP:rs41276455.">
    <original>D</original>
    <variation>N</variation>
    <location>
        <position position="2097"/>
    </location>
</feature>
<feature type="sequence conflict" description="In Ref. 3; BAA07804." evidence="19" ref="3">
    <original>S</original>
    <variation>T</variation>
    <location>
        <position position="576"/>
    </location>
</feature>
<feature type="sequence conflict" description="In Ref. 1; AAA58402." evidence="19" ref="1">
    <original>S</original>
    <variation>C</variation>
    <location>
        <position position="637"/>
    </location>
</feature>
<feature type="sequence conflict" description="In Ref. 1; AAA58402." evidence="19" ref="1">
    <original>I</original>
    <variation>S</variation>
    <location>
        <position position="650"/>
    </location>
</feature>
<feature type="sequence conflict" description="In Ref. 3; BAA07804." evidence="19" ref="3">
    <original>I</original>
    <variation>T</variation>
    <location>
        <position position="918"/>
    </location>
</feature>
<feature type="sequence conflict" description="In Ref. 3; BAA07804." evidence="19" ref="3">
    <original>M</original>
    <variation>I</variation>
    <location>
        <position position="960"/>
    </location>
</feature>
<feature type="sequence conflict" description="In Ref. 3; BAA07804." evidence="19" ref="3">
    <location>
        <begin position="1289"/>
        <end position="1290"/>
    </location>
</feature>
<feature type="sequence conflict" description="In Ref. 1; AAA58402." evidence="19" ref="1">
    <original>S</original>
    <variation>F</variation>
    <location>
        <position position="1346"/>
    </location>
</feature>
<feature type="sequence conflict" description="In Ref. 1; AAA58402." evidence="19" ref="1">
    <original>Y</original>
    <variation>H</variation>
    <location>
        <position position="1433"/>
    </location>
</feature>
<feature type="turn" evidence="20">
    <location>
        <begin position="124"/>
        <end position="126"/>
    </location>
</feature>
<feature type="helix" evidence="21">
    <location>
        <begin position="129"/>
        <end position="144"/>
    </location>
</feature>
<feature type="helix" evidence="23">
    <location>
        <begin position="150"/>
        <end position="152"/>
    </location>
</feature>
<feature type="helix" evidence="21">
    <location>
        <begin position="156"/>
        <end position="179"/>
    </location>
</feature>
<feature type="helix" evidence="21">
    <location>
        <begin position="196"/>
        <end position="216"/>
    </location>
</feature>
<feature type="helix" evidence="21">
    <location>
        <begin position="236"/>
        <end position="248"/>
    </location>
</feature>
<feature type="helix" evidence="21">
    <location>
        <begin position="249"/>
        <end position="252"/>
    </location>
</feature>
<feature type="helix" evidence="21">
    <location>
        <begin position="255"/>
        <end position="266"/>
    </location>
</feature>
<feature type="helix" evidence="21">
    <location>
        <begin position="269"/>
        <end position="292"/>
    </location>
</feature>
<feature type="strand" evidence="22">
    <location>
        <begin position="293"/>
        <end position="295"/>
    </location>
</feature>
<feature type="strand" evidence="21">
    <location>
        <begin position="299"/>
        <end position="303"/>
    </location>
</feature>
<feature type="strand" evidence="21">
    <location>
        <begin position="309"/>
        <end position="313"/>
    </location>
</feature>
<feature type="strand" evidence="21">
    <location>
        <begin position="319"/>
        <end position="323"/>
    </location>
</feature>
<feature type="strand" evidence="24">
    <location>
        <begin position="328"/>
        <end position="330"/>
    </location>
</feature>
<feature type="strand" evidence="21">
    <location>
        <begin position="331"/>
        <end position="335"/>
    </location>
</feature>
<feature type="turn" evidence="21">
    <location>
        <begin position="340"/>
        <end position="343"/>
    </location>
</feature>
<feature type="strand" evidence="21">
    <location>
        <begin position="347"/>
        <end position="349"/>
    </location>
</feature>
<feature type="helix" evidence="21">
    <location>
        <begin position="350"/>
        <end position="361"/>
    </location>
</feature>
<feature type="helix" evidence="21">
    <location>
        <begin position="366"/>
        <end position="376"/>
    </location>
</feature>
<feature type="strand" evidence="21">
    <location>
        <begin position="379"/>
        <end position="381"/>
    </location>
</feature>
<feature type="helix" evidence="21">
    <location>
        <begin position="382"/>
        <end position="393"/>
    </location>
</feature>
<feature type="helix" evidence="21">
    <location>
        <begin position="395"/>
        <end position="415"/>
    </location>
</feature>
<feature type="helix" evidence="21">
    <location>
        <begin position="416"/>
        <end position="419"/>
    </location>
</feature>
<feature type="helix" evidence="21">
    <location>
        <begin position="421"/>
        <end position="430"/>
    </location>
</feature>
<feature type="helix" evidence="21">
    <location>
        <begin position="432"/>
        <end position="439"/>
    </location>
</feature>
<feature type="turn" evidence="21">
    <location>
        <begin position="440"/>
        <end position="443"/>
    </location>
</feature>
<feature type="helix" evidence="21">
    <location>
        <begin position="518"/>
        <end position="521"/>
    </location>
</feature>
<feature type="helix" evidence="21">
    <location>
        <begin position="523"/>
        <end position="541"/>
    </location>
</feature>
<feature type="helix" evidence="21">
    <location>
        <begin position="549"/>
        <end position="577"/>
    </location>
</feature>
<feature type="helix" evidence="21">
    <location>
        <begin position="579"/>
        <end position="584"/>
    </location>
</feature>
<feature type="helix" evidence="21">
    <location>
        <begin position="586"/>
        <end position="606"/>
    </location>
</feature>
<feature type="helix" evidence="21">
    <location>
        <begin position="614"/>
        <end position="619"/>
    </location>
</feature>
<feature type="helix" evidence="21">
    <location>
        <begin position="622"/>
        <end position="628"/>
    </location>
</feature>
<feature type="helix" evidence="21">
    <location>
        <begin position="630"/>
        <end position="632"/>
    </location>
</feature>
<feature type="strand" evidence="21">
    <location>
        <begin position="634"/>
        <end position="636"/>
    </location>
</feature>
<feature type="helix" evidence="21">
    <location>
        <begin position="637"/>
        <end position="644"/>
    </location>
</feature>
<feature type="helix" evidence="21">
    <location>
        <begin position="647"/>
        <end position="672"/>
    </location>
</feature>
<feature type="strand" evidence="21">
    <location>
        <begin position="680"/>
        <end position="682"/>
    </location>
</feature>
<feature type="helix" evidence="21">
    <location>
        <begin position="691"/>
        <end position="703"/>
    </location>
</feature>
<feature type="turn" evidence="21">
    <location>
        <begin position="704"/>
        <end position="706"/>
    </location>
</feature>
<feature type="helix" evidence="21">
    <location>
        <begin position="707"/>
        <end position="716"/>
    </location>
</feature>
<feature type="turn" evidence="21">
    <location>
        <begin position="717"/>
        <end position="719"/>
    </location>
</feature>
<feature type="strand" evidence="22">
    <location>
        <begin position="720"/>
        <end position="722"/>
    </location>
</feature>
<feature type="turn" evidence="21">
    <location>
        <begin position="723"/>
        <end position="726"/>
    </location>
</feature>
<feature type="helix" evidence="21">
    <location>
        <begin position="727"/>
        <end position="729"/>
    </location>
</feature>
<feature type="helix" evidence="21">
    <location>
        <begin position="730"/>
        <end position="746"/>
    </location>
</feature>
<feature type="helix" evidence="21">
    <location>
        <begin position="748"/>
        <end position="753"/>
    </location>
</feature>
<feature type="helix" evidence="21">
    <location>
        <begin position="755"/>
        <end position="771"/>
    </location>
</feature>
<feature type="helix" evidence="21">
    <location>
        <begin position="877"/>
        <end position="883"/>
    </location>
</feature>
<feature type="helix" evidence="21">
    <location>
        <begin position="888"/>
        <end position="904"/>
    </location>
</feature>
<feature type="strand" evidence="20">
    <location>
        <begin position="911"/>
        <end position="913"/>
    </location>
</feature>
<feature type="helix" evidence="21">
    <location>
        <begin position="914"/>
        <end position="940"/>
    </location>
</feature>
<feature type="helix" evidence="21">
    <location>
        <begin position="954"/>
        <end position="969"/>
    </location>
</feature>
<feature type="helix" evidence="21">
    <location>
        <begin position="980"/>
        <end position="986"/>
    </location>
</feature>
<feature type="helix" evidence="21">
    <location>
        <begin position="987"/>
        <end position="989"/>
    </location>
</feature>
<feature type="helix" evidence="21">
    <location>
        <begin position="991"/>
        <end position="997"/>
    </location>
</feature>
<feature type="helix" evidence="21">
    <location>
        <begin position="999"/>
        <end position="1014"/>
    </location>
</feature>
<feature type="turn" evidence="21">
    <location>
        <begin position="1015"/>
        <end position="1017"/>
    </location>
</feature>
<feature type="helix" evidence="21">
    <location>
        <begin position="1018"/>
        <end position="1037"/>
    </location>
</feature>
<feature type="turn" evidence="22">
    <location>
        <begin position="1038"/>
        <end position="1041"/>
    </location>
</feature>
<feature type="strand" evidence="24">
    <location>
        <begin position="1043"/>
        <end position="1046"/>
    </location>
</feature>
<feature type="turn" evidence="21">
    <location>
        <begin position="1052"/>
        <end position="1054"/>
    </location>
</feature>
<feature type="strand" evidence="21">
    <location>
        <begin position="1057"/>
        <end position="1062"/>
    </location>
</feature>
<feature type="helix" evidence="21">
    <location>
        <begin position="1063"/>
        <end position="1065"/>
    </location>
</feature>
<feature type="strand" evidence="21">
    <location>
        <begin position="1070"/>
        <end position="1074"/>
    </location>
</feature>
<feature type="helix" evidence="21">
    <location>
        <begin position="1087"/>
        <end position="1098"/>
    </location>
</feature>
<feature type="helix" evidence="21">
    <location>
        <begin position="1103"/>
        <end position="1111"/>
    </location>
</feature>
<feature type="strand" evidence="23">
    <location>
        <begin position="1115"/>
        <end position="1118"/>
    </location>
</feature>
<feature type="helix" evidence="21">
    <location>
        <begin position="1126"/>
        <end position="1128"/>
    </location>
</feature>
<feature type="helix" evidence="21">
    <location>
        <begin position="1129"/>
        <end position="1138"/>
    </location>
</feature>
<feature type="turn" evidence="21">
    <location>
        <begin position="1139"/>
        <end position="1141"/>
    </location>
</feature>
<feature type="helix" evidence="21">
    <location>
        <begin position="1142"/>
        <end position="1158"/>
    </location>
</feature>
<feature type="helix" evidence="21">
    <location>
        <begin position="1159"/>
        <end position="1161"/>
    </location>
</feature>
<feature type="strand" evidence="22">
    <location>
        <begin position="1166"/>
        <end position="1168"/>
    </location>
</feature>
<feature type="helix" evidence="21">
    <location>
        <begin position="1170"/>
        <end position="1180"/>
    </location>
</feature>
<feature type="helix" evidence="21">
    <location>
        <begin position="1193"/>
        <end position="1202"/>
    </location>
</feature>
<feature type="helix" evidence="21">
    <location>
        <begin position="1205"/>
        <end position="1223"/>
    </location>
</feature>
<feature type="helix" evidence="21">
    <location>
        <begin position="1231"/>
        <end position="1259"/>
    </location>
</feature>
<feature type="helix" evidence="21">
    <location>
        <begin position="1261"/>
        <end position="1264"/>
    </location>
</feature>
<feature type="helix" evidence="21">
    <location>
        <begin position="1268"/>
        <end position="1287"/>
    </location>
</feature>
<feature type="helix" evidence="21">
    <location>
        <begin position="1316"/>
        <end position="1319"/>
    </location>
</feature>
<feature type="helix" evidence="21">
    <location>
        <begin position="1320"/>
        <end position="1324"/>
    </location>
</feature>
<feature type="helix" evidence="21">
    <location>
        <begin position="1325"/>
        <end position="1330"/>
    </location>
</feature>
<feature type="turn" evidence="21">
    <location>
        <begin position="1334"/>
        <end position="1336"/>
    </location>
</feature>
<feature type="helix" evidence="21">
    <location>
        <begin position="1337"/>
        <end position="1349"/>
    </location>
</feature>
<feature type="helix" evidence="21">
    <location>
        <begin position="1353"/>
        <end position="1372"/>
    </location>
</feature>
<feature type="strand" evidence="21">
    <location>
        <begin position="1379"/>
        <end position="1387"/>
    </location>
</feature>
<feature type="strand" evidence="21">
    <location>
        <begin position="1389"/>
        <end position="1391"/>
    </location>
</feature>
<feature type="helix" evidence="21">
    <location>
        <begin position="1392"/>
        <end position="1403"/>
    </location>
</feature>
<feature type="helix" evidence="21">
    <location>
        <begin position="1408"/>
        <end position="1413"/>
    </location>
</feature>
<feature type="strand" evidence="21">
    <location>
        <begin position="1416"/>
        <end position="1418"/>
    </location>
</feature>
<feature type="helix" evidence="21">
    <location>
        <begin position="1440"/>
        <end position="1464"/>
    </location>
</feature>
<feature type="helix" evidence="21">
    <location>
        <begin position="1467"/>
        <end position="1470"/>
    </location>
</feature>
<feature type="turn" evidence="21">
    <location>
        <begin position="1474"/>
        <end position="1476"/>
    </location>
</feature>
<feature type="helix" evidence="21">
    <location>
        <begin position="1479"/>
        <end position="1491"/>
    </location>
</feature>
<feature type="strand" evidence="21">
    <location>
        <begin position="1498"/>
        <end position="1500"/>
    </location>
</feature>
<feature type="helix" evidence="21">
    <location>
        <begin position="1502"/>
        <end position="1504"/>
    </location>
</feature>
<feature type="helix" evidence="21">
    <location>
        <begin position="1505"/>
        <end position="1510"/>
    </location>
</feature>
<feature type="turn" evidence="21">
    <location>
        <begin position="1514"/>
        <end position="1516"/>
    </location>
</feature>
<feature type="turn" evidence="21">
    <location>
        <begin position="1523"/>
        <end position="1526"/>
    </location>
</feature>
<feature type="helix" evidence="21">
    <location>
        <begin position="1527"/>
        <end position="1533"/>
    </location>
</feature>
<feature type="strand" evidence="20">
    <location>
        <begin position="1544"/>
        <end position="1546"/>
    </location>
</feature>
<feature type="helix" evidence="21">
    <location>
        <begin position="1547"/>
        <end position="1557"/>
    </location>
</feature>
<feature type="turn" evidence="20">
    <location>
        <begin position="1563"/>
        <end position="1565"/>
    </location>
</feature>
<feature type="helix" evidence="21">
    <location>
        <begin position="1566"/>
        <end position="1575"/>
    </location>
</feature>
<feature type="turn" evidence="21">
    <location>
        <begin position="1581"/>
        <end position="1584"/>
    </location>
</feature>
<feature type="helix" evidence="21">
    <location>
        <begin position="1585"/>
        <end position="1588"/>
    </location>
</feature>
<organism>
    <name type="scientific">Homo sapiens</name>
    <name type="common">Human</name>
    <dbReference type="NCBI Taxonomy" id="9606"/>
    <lineage>
        <taxon>Eukaryota</taxon>
        <taxon>Metazoa</taxon>
        <taxon>Chordata</taxon>
        <taxon>Craniata</taxon>
        <taxon>Vertebrata</taxon>
        <taxon>Euteleostomi</taxon>
        <taxon>Mammalia</taxon>
        <taxon>Eutheria</taxon>
        <taxon>Euarchontoglires</taxon>
        <taxon>Primates</taxon>
        <taxon>Haplorrhini</taxon>
        <taxon>Catarrhini</taxon>
        <taxon>Hominidae</taxon>
        <taxon>Homo</taxon>
    </lineage>
</organism>
<dbReference type="EMBL" id="M76558">
    <property type="protein sequence ID" value="AAA58402.1"/>
    <property type="molecule type" value="mRNA"/>
</dbReference>
<dbReference type="EMBL" id="M83566">
    <property type="protein sequence ID" value="AAA35629.1"/>
    <property type="molecule type" value="mRNA"/>
</dbReference>
<dbReference type="EMBL" id="D43747">
    <property type="protein sequence ID" value="BAA07804.1"/>
    <property type="molecule type" value="Genomic_DNA"/>
</dbReference>
<dbReference type="EMBL" id="EU363339">
    <property type="protein sequence ID" value="ABY66526.1"/>
    <property type="molecule type" value="mRNA"/>
</dbReference>
<dbReference type="EMBL" id="AC005905">
    <property type="status" value="NOT_ANNOTATED_CDS"/>
    <property type="molecule type" value="Genomic_DNA"/>
</dbReference>
<dbReference type="EMBL" id="AC012467">
    <property type="status" value="NOT_ANNOTATED_CDS"/>
    <property type="molecule type" value="Genomic_DNA"/>
</dbReference>
<dbReference type="EMBL" id="AC024149">
    <property type="status" value="NOT_ANNOTATED_CDS"/>
    <property type="molecule type" value="Genomic_DNA"/>
</dbReference>
<dbReference type="EMBL" id="AC132810">
    <property type="status" value="NOT_ANNOTATED_CDS"/>
    <property type="molecule type" value="Genomic_DNA"/>
</dbReference>
<dbReference type="EMBL" id="AF055575">
    <property type="protein sequence ID" value="AAD08651.1"/>
    <property type="molecule type" value="Genomic_DNA"/>
</dbReference>
<dbReference type="CCDS" id="CCDS2872.1">
    <molecule id="Q01668-2"/>
</dbReference>
<dbReference type="CCDS" id="CCDS46848.1">
    <molecule id="Q01668-1"/>
</dbReference>
<dbReference type="CCDS" id="CCDS46849.1">
    <molecule id="Q01668-3"/>
</dbReference>
<dbReference type="PIR" id="JH0564">
    <property type="entry name" value="JH0564"/>
</dbReference>
<dbReference type="RefSeq" id="NP_000711.1">
    <molecule id="Q01668-2"/>
    <property type="nucleotide sequence ID" value="NM_000720.4"/>
</dbReference>
<dbReference type="RefSeq" id="NP_001122311.1">
    <molecule id="Q01668-3"/>
    <property type="nucleotide sequence ID" value="NM_001128839.3"/>
</dbReference>
<dbReference type="RefSeq" id="NP_001122312.1">
    <molecule id="Q01668-1"/>
    <property type="nucleotide sequence ID" value="NM_001128840.3"/>
</dbReference>
<dbReference type="PDB" id="3LV3">
    <property type="method" value="X-ray"/>
    <property type="resolution" value="1.94 A"/>
    <property type="chains" value="C=502-510"/>
</dbReference>
<dbReference type="PDB" id="7UHF">
    <property type="method" value="EM"/>
    <property type="resolution" value="3.10 A"/>
    <property type="chains" value="A=1-2161"/>
</dbReference>
<dbReference type="PDB" id="7UHG">
    <property type="method" value="EM"/>
    <property type="resolution" value="3.00 A"/>
    <property type="chains" value="A=1-2161"/>
</dbReference>
<dbReference type="PDB" id="8E59">
    <property type="method" value="EM"/>
    <property type="resolution" value="3.10 A"/>
    <property type="chains" value="A=1-2161"/>
</dbReference>
<dbReference type="PDB" id="8E5A">
    <property type="method" value="EM"/>
    <property type="resolution" value="3.30 A"/>
    <property type="chains" value="A=1-2161"/>
</dbReference>
<dbReference type="PDB" id="8E5B">
    <property type="method" value="EM"/>
    <property type="resolution" value="3.30 A"/>
    <property type="chains" value="A=1-2161"/>
</dbReference>
<dbReference type="PDBsum" id="3LV3"/>
<dbReference type="PDBsum" id="7UHF"/>
<dbReference type="PDBsum" id="7UHG"/>
<dbReference type="PDBsum" id="8E59"/>
<dbReference type="PDBsum" id="8E5A"/>
<dbReference type="PDBsum" id="8E5B"/>
<dbReference type="EMDB" id="EMD-26513"/>
<dbReference type="EMDB" id="EMD-26514"/>
<dbReference type="EMDB" id="EMD-27907"/>
<dbReference type="EMDB" id="EMD-27908"/>
<dbReference type="EMDB" id="EMD-27909"/>
<dbReference type="SMR" id="Q01668"/>
<dbReference type="BioGRID" id="107230">
    <property type="interactions" value="12"/>
</dbReference>
<dbReference type="DIP" id="DIP-48998N"/>
<dbReference type="FunCoup" id="Q01668">
    <property type="interactions" value="1583"/>
</dbReference>
<dbReference type="IntAct" id="Q01668">
    <property type="interactions" value="4"/>
</dbReference>
<dbReference type="STRING" id="9606.ENSP00000288139"/>
<dbReference type="BindingDB" id="Q01668"/>
<dbReference type="ChEMBL" id="CHEMBL4138"/>
<dbReference type="DrugBank" id="DB01118">
    <property type="generic name" value="Amiodarone"/>
</dbReference>
<dbReference type="DrugBank" id="DB09229">
    <property type="generic name" value="Aranidipine"/>
</dbReference>
<dbReference type="DrugBank" id="DB09231">
    <property type="generic name" value="Benidipine"/>
</dbReference>
<dbReference type="DrugBank" id="DB13746">
    <property type="generic name" value="Bioallethrin"/>
</dbReference>
<dbReference type="DrugBank" id="DB11148">
    <property type="generic name" value="Butamben"/>
</dbReference>
<dbReference type="DrugBank" id="DB11093">
    <property type="generic name" value="Calcium citrate"/>
</dbReference>
<dbReference type="DrugBank" id="DB11348">
    <property type="generic name" value="Calcium Phosphate"/>
</dbReference>
<dbReference type="DrugBank" id="DB14481">
    <property type="generic name" value="Calcium phosphate dihydrate"/>
</dbReference>
<dbReference type="DrugBank" id="DB09232">
    <property type="generic name" value="Cilnidipine"/>
</dbReference>
<dbReference type="DrugBank" id="DB00568">
    <property type="generic name" value="Cinnarizine"/>
</dbReference>
<dbReference type="DrugBank" id="DB04920">
    <property type="generic name" value="Clevidipine"/>
</dbReference>
<dbReference type="DrugBank" id="DB04855">
    <property type="generic name" value="Dronedarone"/>
</dbReference>
<dbReference type="DrugBank" id="DB06751">
    <property type="generic name" value="Drotaverine"/>
</dbReference>
<dbReference type="DrugBank" id="DB09235">
    <property type="generic name" value="Efonidipine"/>
</dbReference>
<dbReference type="DrugBank" id="DB00228">
    <property type="generic name" value="Enflurane"/>
</dbReference>
<dbReference type="DrugBank" id="DB00153">
    <property type="generic name" value="Ergocalciferol"/>
</dbReference>
<dbReference type="DrugBank" id="DB00898">
    <property type="generic name" value="Ethanol"/>
</dbReference>
<dbReference type="DrugBank" id="DB01023">
    <property type="generic name" value="Felodipine"/>
</dbReference>
<dbReference type="DrugBank" id="DB13961">
    <property type="generic name" value="Fish oil"/>
</dbReference>
<dbReference type="DrugBank" id="DB00270">
    <property type="generic name" value="Isradipine"/>
</dbReference>
<dbReference type="DrugBank" id="DB09236">
    <property type="generic name" value="Lacidipine"/>
</dbReference>
<dbReference type="DrugBank" id="DB09237">
    <property type="generic name" value="Levamlodipine"/>
</dbReference>
<dbReference type="DrugBank" id="DB00825">
    <property type="generic name" value="Levomenthol"/>
</dbReference>
<dbReference type="DrugBank" id="DB00653">
    <property type="generic name" value="Magnesium sulfate"/>
</dbReference>
<dbReference type="DrugBank" id="DB09238">
    <property type="generic name" value="Manidipine"/>
</dbReference>
<dbReference type="DrugBank" id="DB01388">
    <property type="generic name" value="Mibefradil"/>
</dbReference>
<dbReference type="DrugBank" id="DB01110">
    <property type="generic name" value="Miconazole"/>
</dbReference>
<dbReference type="DrugBank" id="DB00622">
    <property type="generic name" value="Nicardipine"/>
</dbReference>
<dbReference type="DrugBank" id="DB01115">
    <property type="generic name" value="Nifedipine"/>
</dbReference>
<dbReference type="DrugBank" id="DB06712">
    <property type="generic name" value="Nilvadipine"/>
</dbReference>
<dbReference type="DrugBank" id="DB00393">
    <property type="generic name" value="Nimodipine"/>
</dbReference>
<dbReference type="DrugBank" id="DB00401">
    <property type="generic name" value="Nisoldipine"/>
</dbReference>
<dbReference type="DrugBank" id="DB01054">
    <property type="generic name" value="Nitrendipine"/>
</dbReference>
<dbReference type="DrugBank" id="DB00252">
    <property type="generic name" value="Phenytoin"/>
</dbReference>
<dbReference type="DrugBank" id="DB00243">
    <property type="generic name" value="Ranolazine"/>
</dbReference>
<dbReference type="DrugBank" id="DB00421">
    <property type="generic name" value="Spironolactone"/>
</dbReference>
<dbReference type="DrugBank" id="DB00273">
    <property type="generic name" value="Topiramate"/>
</dbReference>
<dbReference type="DrugBank" id="DB09089">
    <property type="generic name" value="Trimebutine"/>
</dbReference>
<dbReference type="DrugBank" id="DB00661">
    <property type="generic name" value="Verapamil"/>
</dbReference>
<dbReference type="DrugCentral" id="Q01668"/>
<dbReference type="GuidetoPHARMACOLOGY" id="530"/>
<dbReference type="TCDB" id="1.A.1.11.31">
    <property type="family name" value="the voltage-gated ion channel (vic) superfamily"/>
</dbReference>
<dbReference type="GlyCosmos" id="Q01668">
    <property type="glycosylation" value="3 sites, No reported glycans"/>
</dbReference>
<dbReference type="GlyGen" id="Q01668">
    <property type="glycosylation" value="11 sites, 3 N-linked glycans (3 sites), 1 O-linked glycan (1 site)"/>
</dbReference>
<dbReference type="iPTMnet" id="Q01668"/>
<dbReference type="PhosphoSitePlus" id="Q01668"/>
<dbReference type="BioMuta" id="CACNA1D"/>
<dbReference type="DMDM" id="116241275"/>
<dbReference type="jPOST" id="Q01668"/>
<dbReference type="MassIVE" id="Q01668"/>
<dbReference type="PaxDb" id="9606-ENSP00000288139"/>
<dbReference type="PeptideAtlas" id="Q01668"/>
<dbReference type="ProteomicsDB" id="2547"/>
<dbReference type="ProteomicsDB" id="57981">
    <molecule id="Q01668-1"/>
</dbReference>
<dbReference type="ProteomicsDB" id="57982">
    <molecule id="Q01668-2"/>
</dbReference>
<dbReference type="ABCD" id="Q01668">
    <property type="antibodies" value="2 sequenced antibodies"/>
</dbReference>
<dbReference type="Antibodypedia" id="4062">
    <property type="antibodies" value="294 antibodies from 32 providers"/>
</dbReference>
<dbReference type="DNASU" id="776"/>
<dbReference type="Ensembl" id="ENST00000288139.11">
    <molecule id="Q01668-2"/>
    <property type="protein sequence ID" value="ENSP00000288139.3"/>
    <property type="gene ID" value="ENSG00000157388.20"/>
</dbReference>
<dbReference type="Ensembl" id="ENST00000350061.11">
    <molecule id="Q01668-1"/>
    <property type="protein sequence ID" value="ENSP00000288133.5"/>
    <property type="gene ID" value="ENSG00000157388.20"/>
</dbReference>
<dbReference type="Ensembl" id="ENST00000422281.7">
    <molecule id="Q01668-3"/>
    <property type="protein sequence ID" value="ENSP00000409174.2"/>
    <property type="gene ID" value="ENSG00000157388.20"/>
</dbReference>
<dbReference type="GeneID" id="776"/>
<dbReference type="KEGG" id="hsa:776"/>
<dbReference type="MANE-Select" id="ENST00000350061.11">
    <property type="protein sequence ID" value="ENSP00000288133.5"/>
    <property type="RefSeq nucleotide sequence ID" value="NM_001128840.3"/>
    <property type="RefSeq protein sequence ID" value="NP_001122312.1"/>
</dbReference>
<dbReference type="UCSC" id="uc003dgu.6">
    <molecule id="Q01668-1"/>
    <property type="organism name" value="human"/>
</dbReference>
<dbReference type="AGR" id="HGNC:1391"/>
<dbReference type="CTD" id="776"/>
<dbReference type="DisGeNET" id="776"/>
<dbReference type="GeneCards" id="CACNA1D"/>
<dbReference type="HGNC" id="HGNC:1391">
    <property type="gene designation" value="CACNA1D"/>
</dbReference>
<dbReference type="HPA" id="ENSG00000157388">
    <property type="expression patterns" value="Low tissue specificity"/>
</dbReference>
<dbReference type="MalaCards" id="CACNA1D"/>
<dbReference type="MIM" id="114206">
    <property type="type" value="gene"/>
</dbReference>
<dbReference type="MIM" id="614896">
    <property type="type" value="phenotype"/>
</dbReference>
<dbReference type="MIM" id="615474">
    <property type="type" value="phenotype"/>
</dbReference>
<dbReference type="neXtProt" id="NX_Q01668"/>
<dbReference type="OpenTargets" id="ENSG00000157388"/>
<dbReference type="Orphanet" id="369929">
    <property type="disease" value="Primary hyperaldosteronism-seizures-neurological abnormalities syndrome"/>
</dbReference>
<dbReference type="Orphanet" id="324321">
    <property type="disease" value="Sinoatrial node dysfunction and deafness"/>
</dbReference>
<dbReference type="PharmGKB" id="PA84"/>
<dbReference type="VEuPathDB" id="HostDB:ENSG00000157388"/>
<dbReference type="eggNOG" id="KOG2301">
    <property type="taxonomic scope" value="Eukaryota"/>
</dbReference>
<dbReference type="GeneTree" id="ENSGT00940000154839"/>
<dbReference type="HOGENOM" id="CLU_000540_0_1_1"/>
<dbReference type="InParanoid" id="Q01668"/>
<dbReference type="OMA" id="QFMASAI"/>
<dbReference type="OrthoDB" id="431720at2759"/>
<dbReference type="PAN-GO" id="Q01668">
    <property type="GO annotations" value="2 GO annotations based on evolutionary models"/>
</dbReference>
<dbReference type="PhylomeDB" id="Q01668"/>
<dbReference type="TreeFam" id="TF312805"/>
<dbReference type="PathwayCommons" id="Q01668"/>
<dbReference type="Reactome" id="R-HSA-400042">
    <property type="pathway name" value="Adrenaline,noradrenaline inhibits insulin secretion"/>
</dbReference>
<dbReference type="Reactome" id="R-HSA-419037">
    <property type="pathway name" value="NCAM1 interactions"/>
</dbReference>
<dbReference type="Reactome" id="R-HSA-422356">
    <property type="pathway name" value="Regulation of insulin secretion"/>
</dbReference>
<dbReference type="Reactome" id="R-HSA-9662360">
    <property type="pathway name" value="Sensory processing of sound by inner hair cells of the cochlea"/>
</dbReference>
<dbReference type="SignaLink" id="Q01668"/>
<dbReference type="SIGNOR" id="Q01668"/>
<dbReference type="BioGRID-ORCS" id="776">
    <property type="hits" value="14 hits in 1163 CRISPR screens"/>
</dbReference>
<dbReference type="ChiTaRS" id="CACNA1D">
    <property type="organism name" value="human"/>
</dbReference>
<dbReference type="EvolutionaryTrace" id="Q01668"/>
<dbReference type="GeneWiki" id="Cav1.3"/>
<dbReference type="GenomeRNAi" id="776"/>
<dbReference type="Pharos" id="Q01668">
    <property type="development level" value="Tclin"/>
</dbReference>
<dbReference type="PRO" id="PR:Q01668"/>
<dbReference type="Proteomes" id="UP000005640">
    <property type="component" value="Chromosome 3"/>
</dbReference>
<dbReference type="RNAct" id="Q01668">
    <property type="molecule type" value="protein"/>
</dbReference>
<dbReference type="Bgee" id="ENSG00000157388">
    <property type="expression patterns" value="Expressed in buccal mucosa cell and 149 other cell types or tissues"/>
</dbReference>
<dbReference type="ExpressionAtlas" id="Q01668">
    <property type="expression patterns" value="baseline and differential"/>
</dbReference>
<dbReference type="GO" id="GO:1990454">
    <property type="term" value="C:L-type voltage-gated calcium channel complex"/>
    <property type="evidence" value="ECO:0000314"/>
    <property type="project" value="BHF-UCL"/>
</dbReference>
<dbReference type="GO" id="GO:0005886">
    <property type="term" value="C:plasma membrane"/>
    <property type="evidence" value="ECO:0000250"/>
    <property type="project" value="BHF-UCL"/>
</dbReference>
<dbReference type="GO" id="GO:0005891">
    <property type="term" value="C:voltage-gated calcium channel complex"/>
    <property type="evidence" value="ECO:0000314"/>
    <property type="project" value="UniProtKB"/>
</dbReference>
<dbReference type="GO" id="GO:0030018">
    <property type="term" value="C:Z disc"/>
    <property type="evidence" value="ECO:0000250"/>
    <property type="project" value="BHF-UCL"/>
</dbReference>
<dbReference type="GO" id="GO:0051393">
    <property type="term" value="F:alpha-actinin binding"/>
    <property type="evidence" value="ECO:0000353"/>
    <property type="project" value="BHF-UCL"/>
</dbReference>
<dbReference type="GO" id="GO:0030506">
    <property type="term" value="F:ankyrin binding"/>
    <property type="evidence" value="ECO:0000250"/>
    <property type="project" value="BHF-UCL"/>
</dbReference>
<dbReference type="GO" id="GO:0005262">
    <property type="term" value="F:calcium channel activity"/>
    <property type="evidence" value="ECO:0000315"/>
    <property type="project" value="UniProtKB"/>
</dbReference>
<dbReference type="GO" id="GO:0046872">
    <property type="term" value="F:metal ion binding"/>
    <property type="evidence" value="ECO:0007669"/>
    <property type="project" value="UniProtKB-KW"/>
</dbReference>
<dbReference type="GO" id="GO:0005245">
    <property type="term" value="F:voltage-gated calcium channel activity"/>
    <property type="evidence" value="ECO:0000314"/>
    <property type="project" value="UniProtKB"/>
</dbReference>
<dbReference type="GO" id="GO:0086007">
    <property type="term" value="F:voltage-gated calcium channel activity involved in cardiac muscle cell action potential"/>
    <property type="evidence" value="ECO:0000305"/>
    <property type="project" value="BHF-UCL"/>
</dbReference>
<dbReference type="GO" id="GO:0086059">
    <property type="term" value="F:voltage-gated calcium channel activity involved SA node cell action potential"/>
    <property type="evidence" value="ECO:0000315"/>
    <property type="project" value="BHF-UCL"/>
</dbReference>
<dbReference type="GO" id="GO:0007188">
    <property type="term" value="P:adenylate cyclase-modulating G protein-coupled receptor signaling pathway"/>
    <property type="evidence" value="ECO:0000250"/>
    <property type="project" value="BHF-UCL"/>
</dbReference>
<dbReference type="GO" id="GO:0070509">
    <property type="term" value="P:calcium ion import"/>
    <property type="evidence" value="ECO:0000314"/>
    <property type="project" value="BHF-UCL"/>
</dbReference>
<dbReference type="GO" id="GO:0098703">
    <property type="term" value="P:calcium ion import across plasma membrane"/>
    <property type="evidence" value="ECO:0000318"/>
    <property type="project" value="GO_Central"/>
</dbReference>
<dbReference type="GO" id="GO:0070588">
    <property type="term" value="P:calcium ion transmembrane transport"/>
    <property type="evidence" value="ECO:0000250"/>
    <property type="project" value="BHF-UCL"/>
</dbReference>
<dbReference type="GO" id="GO:0006816">
    <property type="term" value="P:calcium ion transport"/>
    <property type="evidence" value="ECO:0000314"/>
    <property type="project" value="UniProtKB"/>
</dbReference>
<dbReference type="GO" id="GO:0086002">
    <property type="term" value="P:cardiac muscle cell action potential involved in contraction"/>
    <property type="evidence" value="ECO:0000315"/>
    <property type="project" value="BHF-UCL"/>
</dbReference>
<dbReference type="GO" id="GO:0086012">
    <property type="term" value="P:membrane depolarization during cardiac muscle cell action potential"/>
    <property type="evidence" value="ECO:0000305"/>
    <property type="project" value="BHF-UCL"/>
</dbReference>
<dbReference type="GO" id="GO:0086046">
    <property type="term" value="P:membrane depolarization during SA node cell action potential"/>
    <property type="evidence" value="ECO:0000315"/>
    <property type="project" value="BHF-UCL"/>
</dbReference>
<dbReference type="GO" id="GO:0045762">
    <property type="term" value="P:positive regulation of adenylate cyclase activity"/>
    <property type="evidence" value="ECO:0000250"/>
    <property type="project" value="UniProtKB"/>
</dbReference>
<dbReference type="GO" id="GO:0051928">
    <property type="term" value="P:positive regulation of calcium ion transport"/>
    <property type="evidence" value="ECO:0000314"/>
    <property type="project" value="BHF-UCL"/>
</dbReference>
<dbReference type="GO" id="GO:0060372">
    <property type="term" value="P:regulation of atrial cardiac muscle cell membrane repolarization"/>
    <property type="evidence" value="ECO:0000250"/>
    <property type="project" value="BHF-UCL"/>
</dbReference>
<dbReference type="GO" id="GO:0086091">
    <property type="term" value="P:regulation of heart rate by cardiac conduction"/>
    <property type="evidence" value="ECO:0000315"/>
    <property type="project" value="BHF-UCL"/>
</dbReference>
<dbReference type="GO" id="GO:1901379">
    <property type="term" value="P:regulation of potassium ion transmembrane transport"/>
    <property type="evidence" value="ECO:0000250"/>
    <property type="project" value="BHF-UCL"/>
</dbReference>
<dbReference type="GO" id="GO:0007605">
    <property type="term" value="P:sensory perception of sound"/>
    <property type="evidence" value="ECO:0000315"/>
    <property type="project" value="BHF-UCL"/>
</dbReference>
<dbReference type="FunFam" id="1.10.287.70:FF:000007">
    <property type="entry name" value="Voltage-dependent L-type calcium channel subunit alpha"/>
    <property type="match status" value="1"/>
</dbReference>
<dbReference type="FunFam" id="1.10.287.70:FF:000009">
    <property type="entry name" value="Voltage-dependent L-type calcium channel subunit alpha"/>
    <property type="match status" value="1"/>
</dbReference>
<dbReference type="FunFam" id="1.10.287.70:FF:000021">
    <property type="entry name" value="Voltage-dependent L-type calcium channel subunit alpha"/>
    <property type="match status" value="1"/>
</dbReference>
<dbReference type="FunFam" id="1.20.120.350:FF:000001">
    <property type="entry name" value="Voltage-dependent L-type calcium channel subunit alpha"/>
    <property type="match status" value="1"/>
</dbReference>
<dbReference type="FunFam" id="1.20.120.350:FF:000006">
    <property type="entry name" value="Voltage-dependent L-type calcium channel subunit alpha"/>
    <property type="match status" value="1"/>
</dbReference>
<dbReference type="FunFam" id="1.20.120.350:FF:000010">
    <property type="entry name" value="Voltage-dependent L-type calcium channel subunit alpha"/>
    <property type="match status" value="1"/>
</dbReference>
<dbReference type="FunFam" id="1.20.120.350:FF:000027">
    <property type="entry name" value="Voltage-dependent L-type calcium channel subunit alpha"/>
    <property type="match status" value="1"/>
</dbReference>
<dbReference type="FunFam" id="1.10.238.10:FF:000063">
    <property type="entry name" value="Voltage-dependent N-type calcium channel subunit alpha"/>
    <property type="match status" value="1"/>
</dbReference>
<dbReference type="Gene3D" id="1.10.287.70">
    <property type="match status" value="4"/>
</dbReference>
<dbReference type="Gene3D" id="6.10.250.2180">
    <property type="match status" value="1"/>
</dbReference>
<dbReference type="Gene3D" id="6.10.250.2500">
    <property type="match status" value="1"/>
</dbReference>
<dbReference type="Gene3D" id="1.20.120.350">
    <property type="entry name" value="Voltage-gated potassium channels. Chain C"/>
    <property type="match status" value="4"/>
</dbReference>
<dbReference type="InterPro" id="IPR031688">
    <property type="entry name" value="CAC1F_C"/>
</dbReference>
<dbReference type="InterPro" id="IPR031649">
    <property type="entry name" value="GPHH_dom"/>
</dbReference>
<dbReference type="InterPro" id="IPR005821">
    <property type="entry name" value="Ion_trans_dom"/>
</dbReference>
<dbReference type="InterPro" id="IPR005452">
    <property type="entry name" value="LVDCC_a1dsu"/>
</dbReference>
<dbReference type="InterPro" id="IPR014873">
    <property type="entry name" value="VDCC_a1su_IQ"/>
</dbReference>
<dbReference type="InterPro" id="IPR050599">
    <property type="entry name" value="VDCC_alpha-1_subunit"/>
</dbReference>
<dbReference type="InterPro" id="IPR005446">
    <property type="entry name" value="VDCC_L_a1su"/>
</dbReference>
<dbReference type="InterPro" id="IPR002077">
    <property type="entry name" value="VDCCAlpha1"/>
</dbReference>
<dbReference type="InterPro" id="IPR027359">
    <property type="entry name" value="Volt_channel_dom_sf"/>
</dbReference>
<dbReference type="PANTHER" id="PTHR45628">
    <property type="entry name" value="VOLTAGE-DEPENDENT CALCIUM CHANNEL TYPE A SUBUNIT ALPHA-1"/>
    <property type="match status" value="1"/>
</dbReference>
<dbReference type="PANTHER" id="PTHR45628:SF11">
    <property type="entry name" value="VOLTAGE-DEPENDENT L-TYPE CALCIUM CHANNEL SUBUNIT ALPHA-1D"/>
    <property type="match status" value="1"/>
</dbReference>
<dbReference type="Pfam" id="PF08763">
    <property type="entry name" value="Ca_chan_IQ"/>
    <property type="match status" value="1"/>
</dbReference>
<dbReference type="Pfam" id="PF16885">
    <property type="entry name" value="CAC1F_C"/>
    <property type="match status" value="1"/>
</dbReference>
<dbReference type="Pfam" id="PF16905">
    <property type="entry name" value="GPHH"/>
    <property type="match status" value="1"/>
</dbReference>
<dbReference type="Pfam" id="PF00520">
    <property type="entry name" value="Ion_trans"/>
    <property type="match status" value="4"/>
</dbReference>
<dbReference type="PRINTS" id="PR00167">
    <property type="entry name" value="CACHANNEL"/>
</dbReference>
<dbReference type="PRINTS" id="PR01630">
    <property type="entry name" value="LVDCCALPHA1"/>
</dbReference>
<dbReference type="PRINTS" id="PR01636">
    <property type="entry name" value="LVDCCALPHA1D"/>
</dbReference>
<dbReference type="SMART" id="SM01062">
    <property type="entry name" value="Ca_chan_IQ"/>
    <property type="match status" value="1"/>
</dbReference>
<dbReference type="SUPFAM" id="SSF81324">
    <property type="entry name" value="Voltage-gated potassium channels"/>
    <property type="match status" value="4"/>
</dbReference>